<protein>
    <recommendedName>
        <fullName evidence="1">Chaperone SurA</fullName>
    </recommendedName>
    <alternativeName>
        <fullName evidence="1">Peptidyl-prolyl cis-trans isomerase SurA</fullName>
        <shortName evidence="1">PPIase SurA</shortName>
        <ecNumber evidence="1">5.2.1.8</ecNumber>
    </alternativeName>
    <alternativeName>
        <fullName evidence="1">Rotamase SurA</fullName>
    </alternativeName>
</protein>
<sequence>MKTMNPYIRHLILLICCLGGMLAQPLSAAPQDPVEADRIVAVVGSDVITYFELRTRLTAALKQLQKQGTPLPPQDVLERQMLERLIMERAQLQYGRETGMKIDDTQLDLAIGRIAAGNKMTVPQFRAALEKDGVQYAQFREEIRNEMVTVRLREREVDSKLVISEGEIDNYLANQTATGSEEEYQLAHILLRAPESATPEQLQKLRQRGEQALKRARAGENFAQLTAAFSDAPDALQGGDLGWRPLARLPALYAEAGSRLQSGEVSDLLRSSAGFHIVKLVSKRGGSAPASVQQTHARHILIRSSEVLSEAEATRKLEAVRERIANGVDFAEQARLYSQDGSAAKGGELGWLNPGDTVPEFERAMDALKINEVSQVVQSPFGMHLIQVLERRERDVSAERQRAVARQALRERKLDEAYQDWLRQLRDRTYVENRLDEQ</sequence>
<gene>
    <name evidence="1" type="primary">surA</name>
    <name type="ordered locus">Daro_3658</name>
</gene>
<comment type="function">
    <text evidence="1">Chaperone involved in the correct folding and assembly of outer membrane proteins. Recognizes specific patterns of aromatic residues and the orientation of their side chains, which are found more frequently in integral outer membrane proteins. May act in both early periplasmic and late outer membrane-associated steps of protein maturation.</text>
</comment>
<comment type="catalytic activity">
    <reaction evidence="1">
        <text>[protein]-peptidylproline (omega=180) = [protein]-peptidylproline (omega=0)</text>
        <dbReference type="Rhea" id="RHEA:16237"/>
        <dbReference type="Rhea" id="RHEA-COMP:10747"/>
        <dbReference type="Rhea" id="RHEA-COMP:10748"/>
        <dbReference type="ChEBI" id="CHEBI:83833"/>
        <dbReference type="ChEBI" id="CHEBI:83834"/>
        <dbReference type="EC" id="5.2.1.8"/>
    </reaction>
</comment>
<comment type="subcellular location">
    <subcellularLocation>
        <location evidence="1">Periplasm</location>
    </subcellularLocation>
    <text evidence="1">Is capable of associating with the outer membrane.</text>
</comment>
<comment type="domain">
    <text evidence="1">The PPIase activity resides only in the second parvulin domain. The N-terminal region and the C-terminal tail are necessary and sufficient for the chaperone activity of SurA. The PPIase activity is dispensable for SurA to function as a chaperone. The N-terminal region and the C-terminal tail are also required for porin recognition.</text>
</comment>
<reference key="1">
    <citation type="journal article" date="2009" name="BMC Genomics">
        <title>Metabolic analysis of the soil microbe Dechloromonas aromatica str. RCB: indications of a surprisingly complex life-style and cryptic anaerobic pathways for aromatic degradation.</title>
        <authorList>
            <person name="Salinero K.K."/>
            <person name="Keller K."/>
            <person name="Feil W.S."/>
            <person name="Feil H."/>
            <person name="Trong S."/>
            <person name="Di Bartolo G."/>
            <person name="Lapidus A."/>
        </authorList>
    </citation>
    <scope>NUCLEOTIDE SEQUENCE [LARGE SCALE GENOMIC DNA]</scope>
    <source>
        <strain>RCB</strain>
    </source>
</reference>
<feature type="signal peptide" evidence="1">
    <location>
        <begin position="1"/>
        <end position="28"/>
    </location>
</feature>
<feature type="chain" id="PRO_5000100354" description="Chaperone SurA">
    <location>
        <begin position="29"/>
        <end position="438"/>
    </location>
</feature>
<feature type="domain" description="PpiC 1" evidence="1">
    <location>
        <begin position="181"/>
        <end position="282"/>
    </location>
</feature>
<feature type="domain" description="PpiC 2" evidence="1">
    <location>
        <begin position="292"/>
        <end position="390"/>
    </location>
</feature>
<organism>
    <name type="scientific">Dechloromonas aromatica (strain RCB)</name>
    <dbReference type="NCBI Taxonomy" id="159087"/>
    <lineage>
        <taxon>Bacteria</taxon>
        <taxon>Pseudomonadati</taxon>
        <taxon>Pseudomonadota</taxon>
        <taxon>Betaproteobacteria</taxon>
        <taxon>Rhodocyclales</taxon>
        <taxon>Azonexaceae</taxon>
        <taxon>Dechloromonas</taxon>
    </lineage>
</organism>
<proteinExistence type="inferred from homology"/>
<evidence type="ECO:0000255" key="1">
    <source>
        <dbReference type="HAMAP-Rule" id="MF_01183"/>
    </source>
</evidence>
<dbReference type="EC" id="5.2.1.8" evidence="1"/>
<dbReference type="EMBL" id="CP000089">
    <property type="protein sequence ID" value="AAZ48387.1"/>
    <property type="molecule type" value="Genomic_DNA"/>
</dbReference>
<dbReference type="SMR" id="Q479U4"/>
<dbReference type="STRING" id="159087.Daro_3658"/>
<dbReference type="KEGG" id="dar:Daro_3658"/>
<dbReference type="eggNOG" id="COG0760">
    <property type="taxonomic scope" value="Bacteria"/>
</dbReference>
<dbReference type="HOGENOM" id="CLU_034646_11_0_4"/>
<dbReference type="GO" id="GO:0030288">
    <property type="term" value="C:outer membrane-bounded periplasmic space"/>
    <property type="evidence" value="ECO:0007669"/>
    <property type="project" value="InterPro"/>
</dbReference>
<dbReference type="GO" id="GO:0042277">
    <property type="term" value="F:peptide binding"/>
    <property type="evidence" value="ECO:0007669"/>
    <property type="project" value="InterPro"/>
</dbReference>
<dbReference type="GO" id="GO:0003755">
    <property type="term" value="F:peptidyl-prolyl cis-trans isomerase activity"/>
    <property type="evidence" value="ECO:0007669"/>
    <property type="project" value="UniProtKB-UniRule"/>
</dbReference>
<dbReference type="GO" id="GO:0051082">
    <property type="term" value="F:unfolded protein binding"/>
    <property type="evidence" value="ECO:0007669"/>
    <property type="project" value="UniProtKB-UniRule"/>
</dbReference>
<dbReference type="GO" id="GO:0043165">
    <property type="term" value="P:Gram-negative-bacterium-type cell outer membrane assembly"/>
    <property type="evidence" value="ECO:0007669"/>
    <property type="project" value="InterPro"/>
</dbReference>
<dbReference type="GO" id="GO:0006457">
    <property type="term" value="P:protein folding"/>
    <property type="evidence" value="ECO:0007669"/>
    <property type="project" value="UniProtKB-UniRule"/>
</dbReference>
<dbReference type="GO" id="GO:0050821">
    <property type="term" value="P:protein stabilization"/>
    <property type="evidence" value="ECO:0007669"/>
    <property type="project" value="InterPro"/>
</dbReference>
<dbReference type="Gene3D" id="3.10.50.40">
    <property type="match status" value="2"/>
</dbReference>
<dbReference type="Gene3D" id="1.10.4030.10">
    <property type="entry name" value="Porin chaperone SurA, peptide-binding domain"/>
    <property type="match status" value="1"/>
</dbReference>
<dbReference type="HAMAP" id="MF_01183">
    <property type="entry name" value="Chaperone_SurA"/>
    <property type="match status" value="1"/>
</dbReference>
<dbReference type="InterPro" id="IPR050280">
    <property type="entry name" value="OMP_Chaperone_SurA"/>
</dbReference>
<dbReference type="InterPro" id="IPR046357">
    <property type="entry name" value="PPIase_dom_sf"/>
</dbReference>
<dbReference type="InterPro" id="IPR000297">
    <property type="entry name" value="PPIase_PpiC"/>
</dbReference>
<dbReference type="InterPro" id="IPR023058">
    <property type="entry name" value="PPIase_PpiC_CS"/>
</dbReference>
<dbReference type="InterPro" id="IPR023034">
    <property type="entry name" value="PPIase_SurA"/>
</dbReference>
<dbReference type="InterPro" id="IPR015391">
    <property type="entry name" value="SurA_N"/>
</dbReference>
<dbReference type="InterPro" id="IPR027304">
    <property type="entry name" value="Trigger_fact/SurA_dom_sf"/>
</dbReference>
<dbReference type="PANTHER" id="PTHR47637">
    <property type="entry name" value="CHAPERONE SURA"/>
    <property type="match status" value="1"/>
</dbReference>
<dbReference type="PANTHER" id="PTHR47637:SF1">
    <property type="entry name" value="CHAPERONE SURA"/>
    <property type="match status" value="1"/>
</dbReference>
<dbReference type="Pfam" id="PF00639">
    <property type="entry name" value="Rotamase"/>
    <property type="match status" value="1"/>
</dbReference>
<dbReference type="Pfam" id="PF13616">
    <property type="entry name" value="Rotamase_3"/>
    <property type="match status" value="1"/>
</dbReference>
<dbReference type="Pfam" id="PF09312">
    <property type="entry name" value="SurA_N"/>
    <property type="match status" value="1"/>
</dbReference>
<dbReference type="SUPFAM" id="SSF54534">
    <property type="entry name" value="FKBP-like"/>
    <property type="match status" value="2"/>
</dbReference>
<dbReference type="SUPFAM" id="SSF109998">
    <property type="entry name" value="Triger factor/SurA peptide-binding domain-like"/>
    <property type="match status" value="1"/>
</dbReference>
<dbReference type="PROSITE" id="PS01096">
    <property type="entry name" value="PPIC_PPIASE_1"/>
    <property type="match status" value="1"/>
</dbReference>
<dbReference type="PROSITE" id="PS50198">
    <property type="entry name" value="PPIC_PPIASE_2"/>
    <property type="match status" value="2"/>
</dbReference>
<name>SURA_DECAR</name>
<keyword id="KW-0143">Chaperone</keyword>
<keyword id="KW-0413">Isomerase</keyword>
<keyword id="KW-0574">Periplasm</keyword>
<keyword id="KW-0677">Repeat</keyword>
<keyword id="KW-0697">Rotamase</keyword>
<keyword id="KW-0732">Signal</keyword>
<accession>Q479U4</accession>